<gene>
    <name evidence="1" type="primary">cmk</name>
    <name type="ordered locus">UTI89_C0981</name>
</gene>
<feature type="chain" id="PRO_1000048219" description="Cytidylate kinase">
    <location>
        <begin position="1"/>
        <end position="227"/>
    </location>
</feature>
<feature type="binding site" evidence="1">
    <location>
        <begin position="12"/>
        <end position="20"/>
    </location>
    <ligand>
        <name>ATP</name>
        <dbReference type="ChEBI" id="CHEBI:30616"/>
    </ligand>
</feature>
<accession>Q1RDU8</accession>
<organism>
    <name type="scientific">Escherichia coli (strain UTI89 / UPEC)</name>
    <dbReference type="NCBI Taxonomy" id="364106"/>
    <lineage>
        <taxon>Bacteria</taxon>
        <taxon>Pseudomonadati</taxon>
        <taxon>Pseudomonadota</taxon>
        <taxon>Gammaproteobacteria</taxon>
        <taxon>Enterobacterales</taxon>
        <taxon>Enterobacteriaceae</taxon>
        <taxon>Escherichia</taxon>
    </lineage>
</organism>
<protein>
    <recommendedName>
        <fullName evidence="1">Cytidylate kinase</fullName>
        <shortName evidence="1">CK</shortName>
        <ecNumber evidence="1">2.7.4.25</ecNumber>
    </recommendedName>
    <alternativeName>
        <fullName evidence="1">Cytidine monophosphate kinase</fullName>
        <shortName evidence="1">CMP kinase</shortName>
    </alternativeName>
</protein>
<dbReference type="EC" id="2.7.4.25" evidence="1"/>
<dbReference type="EMBL" id="CP000243">
    <property type="protein sequence ID" value="ABE06466.1"/>
    <property type="molecule type" value="Genomic_DNA"/>
</dbReference>
<dbReference type="RefSeq" id="WP_000125016.1">
    <property type="nucleotide sequence ID" value="NZ_CP064825.1"/>
</dbReference>
<dbReference type="SMR" id="Q1RDU8"/>
<dbReference type="GeneID" id="93776507"/>
<dbReference type="KEGG" id="eci:UTI89_C0981"/>
<dbReference type="HOGENOM" id="CLU_079959_0_2_6"/>
<dbReference type="Proteomes" id="UP000001952">
    <property type="component" value="Chromosome"/>
</dbReference>
<dbReference type="GO" id="GO:0005829">
    <property type="term" value="C:cytosol"/>
    <property type="evidence" value="ECO:0007669"/>
    <property type="project" value="TreeGrafter"/>
</dbReference>
<dbReference type="GO" id="GO:0005524">
    <property type="term" value="F:ATP binding"/>
    <property type="evidence" value="ECO:0007669"/>
    <property type="project" value="UniProtKB-UniRule"/>
</dbReference>
<dbReference type="GO" id="GO:0036430">
    <property type="term" value="F:CMP kinase activity"/>
    <property type="evidence" value="ECO:0007669"/>
    <property type="project" value="RHEA"/>
</dbReference>
<dbReference type="GO" id="GO:0036431">
    <property type="term" value="F:dCMP kinase activity"/>
    <property type="evidence" value="ECO:0007669"/>
    <property type="project" value="RHEA"/>
</dbReference>
<dbReference type="GO" id="GO:0015949">
    <property type="term" value="P:nucleobase-containing small molecule interconversion"/>
    <property type="evidence" value="ECO:0007669"/>
    <property type="project" value="TreeGrafter"/>
</dbReference>
<dbReference type="GO" id="GO:0006220">
    <property type="term" value="P:pyrimidine nucleotide metabolic process"/>
    <property type="evidence" value="ECO:0007669"/>
    <property type="project" value="UniProtKB-UniRule"/>
</dbReference>
<dbReference type="CDD" id="cd02020">
    <property type="entry name" value="CMPK"/>
    <property type="match status" value="1"/>
</dbReference>
<dbReference type="FunFam" id="3.40.50.300:FF:000262">
    <property type="entry name" value="Cytidylate kinase"/>
    <property type="match status" value="1"/>
</dbReference>
<dbReference type="Gene3D" id="3.40.50.300">
    <property type="entry name" value="P-loop containing nucleotide triphosphate hydrolases"/>
    <property type="match status" value="1"/>
</dbReference>
<dbReference type="HAMAP" id="MF_00238">
    <property type="entry name" value="Cytidyl_kinase_type1"/>
    <property type="match status" value="1"/>
</dbReference>
<dbReference type="InterPro" id="IPR003136">
    <property type="entry name" value="Cytidylate_kin"/>
</dbReference>
<dbReference type="InterPro" id="IPR011994">
    <property type="entry name" value="Cytidylate_kinase_dom"/>
</dbReference>
<dbReference type="InterPro" id="IPR027417">
    <property type="entry name" value="P-loop_NTPase"/>
</dbReference>
<dbReference type="NCBIfam" id="TIGR00017">
    <property type="entry name" value="cmk"/>
    <property type="match status" value="1"/>
</dbReference>
<dbReference type="PANTHER" id="PTHR21299:SF2">
    <property type="entry name" value="CYTIDYLATE KINASE"/>
    <property type="match status" value="1"/>
</dbReference>
<dbReference type="PANTHER" id="PTHR21299">
    <property type="entry name" value="CYTIDYLATE KINASE/PANTOATE-BETA-ALANINE LIGASE"/>
    <property type="match status" value="1"/>
</dbReference>
<dbReference type="Pfam" id="PF02224">
    <property type="entry name" value="Cytidylate_kin"/>
    <property type="match status" value="1"/>
</dbReference>
<dbReference type="SUPFAM" id="SSF52540">
    <property type="entry name" value="P-loop containing nucleoside triphosphate hydrolases"/>
    <property type="match status" value="1"/>
</dbReference>
<sequence>MTAIAPVITIDGPSGAGKGTLCKAMAEALQWHLLDSGAIYRVLALAALHHHVDVASEDALVPLASHLDVRFVSTNGNLEVILEGEDVSGEIRTQEVANAASQVAAFPRVREALLRRQRAFRELPGLIADGRDMGTVVFPDAPVKIFLDASSEERAHRRMLQLQEKGFSVNFERLLAEIKERDDRDRNRAVAPLVPAADALVLDSTTLSIEQVIEKALQYARQKLALA</sequence>
<proteinExistence type="inferred from homology"/>
<reference key="1">
    <citation type="journal article" date="2006" name="Proc. Natl. Acad. Sci. U.S.A.">
        <title>Identification of genes subject to positive selection in uropathogenic strains of Escherichia coli: a comparative genomics approach.</title>
        <authorList>
            <person name="Chen S.L."/>
            <person name="Hung C.-S."/>
            <person name="Xu J."/>
            <person name="Reigstad C.S."/>
            <person name="Magrini V."/>
            <person name="Sabo A."/>
            <person name="Blasiar D."/>
            <person name="Bieri T."/>
            <person name="Meyer R.R."/>
            <person name="Ozersky P."/>
            <person name="Armstrong J.R."/>
            <person name="Fulton R.S."/>
            <person name="Latreille J.P."/>
            <person name="Spieth J."/>
            <person name="Hooton T.M."/>
            <person name="Mardis E.R."/>
            <person name="Hultgren S.J."/>
            <person name="Gordon J.I."/>
        </authorList>
    </citation>
    <scope>NUCLEOTIDE SEQUENCE [LARGE SCALE GENOMIC DNA]</scope>
    <source>
        <strain>UTI89 / UPEC</strain>
    </source>
</reference>
<comment type="catalytic activity">
    <reaction evidence="1">
        <text>CMP + ATP = CDP + ADP</text>
        <dbReference type="Rhea" id="RHEA:11600"/>
        <dbReference type="ChEBI" id="CHEBI:30616"/>
        <dbReference type="ChEBI" id="CHEBI:58069"/>
        <dbReference type="ChEBI" id="CHEBI:60377"/>
        <dbReference type="ChEBI" id="CHEBI:456216"/>
        <dbReference type="EC" id="2.7.4.25"/>
    </reaction>
</comment>
<comment type="catalytic activity">
    <reaction evidence="1">
        <text>dCMP + ATP = dCDP + ADP</text>
        <dbReference type="Rhea" id="RHEA:25094"/>
        <dbReference type="ChEBI" id="CHEBI:30616"/>
        <dbReference type="ChEBI" id="CHEBI:57566"/>
        <dbReference type="ChEBI" id="CHEBI:58593"/>
        <dbReference type="ChEBI" id="CHEBI:456216"/>
        <dbReference type="EC" id="2.7.4.25"/>
    </reaction>
</comment>
<comment type="subcellular location">
    <subcellularLocation>
        <location evidence="1">Cytoplasm</location>
    </subcellularLocation>
</comment>
<comment type="similarity">
    <text evidence="1">Belongs to the cytidylate kinase family. Type 1 subfamily.</text>
</comment>
<evidence type="ECO:0000255" key="1">
    <source>
        <dbReference type="HAMAP-Rule" id="MF_00238"/>
    </source>
</evidence>
<name>KCY_ECOUT</name>
<keyword id="KW-0067">ATP-binding</keyword>
<keyword id="KW-0963">Cytoplasm</keyword>
<keyword id="KW-0418">Kinase</keyword>
<keyword id="KW-0547">Nucleotide-binding</keyword>
<keyword id="KW-0808">Transferase</keyword>